<sequence>MPSLLLINGPNLNLLGTREPHLYGATTLRDVEEMSRVQANNYGIDLETFQSNHEGHIIDRIHSARGHIDVIIINPGALTHTSVGLRDALVGVSIPFIEVHITNVHAREPFRHHSYLSDKASAILVGLGTYGYEAAIQHAAKNMIRKN</sequence>
<protein>
    <recommendedName>
        <fullName evidence="1">Catabolic 3-dehydroquinase 2</fullName>
        <shortName evidence="1">cDHQase 2</shortName>
        <ecNumber evidence="1">4.2.1.10</ecNumber>
    </recommendedName>
    <alternativeName>
        <fullName evidence="1">3-dehydroquinate dehydratase 2</fullName>
    </alternativeName>
</protein>
<gene>
    <name evidence="1" type="primary">qutE2</name>
    <name type="ORF">ATEG_07673.2</name>
</gene>
<evidence type="ECO:0000255" key="1">
    <source>
        <dbReference type="HAMAP-Rule" id="MF_03136"/>
    </source>
</evidence>
<evidence type="ECO:0000305" key="2"/>
<accession>P0CI63</accession>
<accession>Q0CF61</accession>
<comment type="function">
    <text evidence="1">Is involved in the catabolism of quinate. Allows the utilization of quinate as carbon source via the beta-ketoadipate pathway.</text>
</comment>
<comment type="catalytic activity">
    <reaction evidence="1">
        <text>3-dehydroquinate = 3-dehydroshikimate + H2O</text>
        <dbReference type="Rhea" id="RHEA:21096"/>
        <dbReference type="ChEBI" id="CHEBI:15377"/>
        <dbReference type="ChEBI" id="CHEBI:16630"/>
        <dbReference type="ChEBI" id="CHEBI:32364"/>
        <dbReference type="EC" id="4.2.1.10"/>
    </reaction>
</comment>
<comment type="pathway">
    <text evidence="1">Aromatic compound metabolism; 3,4-dihydroxybenzoate biosynthesis; 3,4-dihydroxybenzoate from 3-dehydroquinate: step 1/2.</text>
</comment>
<comment type="subunit">
    <text evidence="1">Homododecamer. Adopts a ring-like structure, composed of an arrangement of two hexameric rings stacked on top of one another.</text>
</comment>
<comment type="similarity">
    <text evidence="1">Belongs to the type-II 3-dehydroquinase family.</text>
</comment>
<comment type="sequence caution" evidence="2">
    <conflict type="erroneous gene model prediction">
        <sequence resource="EMBL-CDS" id="EAU31935"/>
    </conflict>
    <text>The predicted gene ATEG_07673 has been split into 2 genes: ATEG_07673.1 and ATEG_07673.2.</text>
</comment>
<name>3DHQ2_ASPTN</name>
<proteinExistence type="inferred from homology"/>
<reference key="1">
    <citation type="submission" date="2005-09" db="EMBL/GenBank/DDBJ databases">
        <title>Annotation of the Aspergillus terreus NIH2624 genome.</title>
        <authorList>
            <person name="Birren B.W."/>
            <person name="Lander E.S."/>
            <person name="Galagan J.E."/>
            <person name="Nusbaum C."/>
            <person name="Devon K."/>
            <person name="Henn M."/>
            <person name="Ma L.-J."/>
            <person name="Jaffe D.B."/>
            <person name="Butler J."/>
            <person name="Alvarez P."/>
            <person name="Gnerre S."/>
            <person name="Grabherr M."/>
            <person name="Kleber M."/>
            <person name="Mauceli E.W."/>
            <person name="Brockman W."/>
            <person name="Rounsley S."/>
            <person name="Young S.K."/>
            <person name="LaButti K."/>
            <person name="Pushparaj V."/>
            <person name="DeCaprio D."/>
            <person name="Crawford M."/>
            <person name="Koehrsen M."/>
            <person name="Engels R."/>
            <person name="Montgomery P."/>
            <person name="Pearson M."/>
            <person name="Howarth C."/>
            <person name="Larson L."/>
            <person name="Luoma S."/>
            <person name="White J."/>
            <person name="Alvarado L."/>
            <person name="Kodira C.D."/>
            <person name="Zeng Q."/>
            <person name="Oleary S."/>
            <person name="Yandava C."/>
            <person name="Denning D.W."/>
            <person name="Nierman W.C."/>
            <person name="Milne T."/>
            <person name="Madden K."/>
        </authorList>
    </citation>
    <scope>NUCLEOTIDE SEQUENCE [LARGE SCALE GENOMIC DNA]</scope>
    <source>
        <strain>NIH 2624 / FGSC A1156</strain>
    </source>
</reference>
<organism>
    <name type="scientific">Aspergillus terreus (strain NIH 2624 / FGSC A1156)</name>
    <dbReference type="NCBI Taxonomy" id="341663"/>
    <lineage>
        <taxon>Eukaryota</taxon>
        <taxon>Fungi</taxon>
        <taxon>Dikarya</taxon>
        <taxon>Ascomycota</taxon>
        <taxon>Pezizomycotina</taxon>
        <taxon>Eurotiomycetes</taxon>
        <taxon>Eurotiomycetidae</taxon>
        <taxon>Eurotiales</taxon>
        <taxon>Aspergillaceae</taxon>
        <taxon>Aspergillus</taxon>
        <taxon>Aspergillus subgen. Circumdati</taxon>
    </lineage>
</organism>
<keyword id="KW-0456">Lyase</keyword>
<keyword id="KW-0672">Quinate metabolism</keyword>
<keyword id="KW-1185">Reference proteome</keyword>
<feature type="chain" id="PRO_0000402438" description="Catabolic 3-dehydroquinase 2">
    <location>
        <begin position="1"/>
        <end position="147"/>
    </location>
</feature>
<feature type="active site" description="Proton acceptor" evidence="1">
    <location>
        <position position="23"/>
    </location>
</feature>
<feature type="active site" description="Proton donor" evidence="1">
    <location>
        <position position="100"/>
    </location>
</feature>
<feature type="binding site" evidence="1">
    <location>
        <position position="74"/>
    </location>
    <ligand>
        <name>substrate</name>
    </ligand>
</feature>
<feature type="binding site" evidence="1">
    <location>
        <position position="80"/>
    </location>
    <ligand>
        <name>substrate</name>
    </ligand>
</feature>
<feature type="binding site" evidence="1">
    <location>
        <position position="87"/>
    </location>
    <ligand>
        <name>substrate</name>
    </ligand>
</feature>
<feature type="binding site" evidence="1">
    <location>
        <begin position="101"/>
        <end position="102"/>
    </location>
    <ligand>
        <name>substrate</name>
    </ligand>
</feature>
<feature type="binding site" evidence="1">
    <location>
        <position position="111"/>
    </location>
    <ligand>
        <name>substrate</name>
    </ligand>
</feature>
<feature type="site" description="Transition state stabilizer" evidence="1">
    <location>
        <position position="18"/>
    </location>
</feature>
<dbReference type="EC" id="4.2.1.10" evidence="1"/>
<dbReference type="EMBL" id="CH476604">
    <property type="protein sequence ID" value="EAU31935.1"/>
    <property type="status" value="ALT_SEQ"/>
    <property type="molecule type" value="Genomic_DNA"/>
</dbReference>
<dbReference type="SMR" id="P0CI63"/>
<dbReference type="STRING" id="341663.P0CI63"/>
<dbReference type="EnsemblFungi" id="EAU31935">
    <property type="protein sequence ID" value="EAU31935"/>
    <property type="gene ID" value="ATEG_07673"/>
</dbReference>
<dbReference type="UniPathway" id="UPA00088">
    <property type="reaction ID" value="UER00178"/>
</dbReference>
<dbReference type="Proteomes" id="UP000007963">
    <property type="component" value="Unassembled WGS sequence"/>
</dbReference>
<dbReference type="GO" id="GO:0003855">
    <property type="term" value="F:3-dehydroquinate dehydratase activity"/>
    <property type="evidence" value="ECO:0007669"/>
    <property type="project" value="UniProtKB-UniRule"/>
</dbReference>
<dbReference type="GO" id="GO:0046279">
    <property type="term" value="P:3,4-dihydroxybenzoate biosynthetic process"/>
    <property type="evidence" value="ECO:0007669"/>
    <property type="project" value="UniProtKB-UniRule"/>
</dbReference>
<dbReference type="GO" id="GO:0019631">
    <property type="term" value="P:quinate catabolic process"/>
    <property type="evidence" value="ECO:0007669"/>
    <property type="project" value="TreeGrafter"/>
</dbReference>
<dbReference type="CDD" id="cd00466">
    <property type="entry name" value="DHQase_II"/>
    <property type="match status" value="1"/>
</dbReference>
<dbReference type="Gene3D" id="3.40.50.9100">
    <property type="entry name" value="Dehydroquinase, class II"/>
    <property type="match status" value="1"/>
</dbReference>
<dbReference type="HAMAP" id="MF_00169">
    <property type="entry name" value="AroQ"/>
    <property type="match status" value="1"/>
</dbReference>
<dbReference type="InterPro" id="IPR001874">
    <property type="entry name" value="DHquinase_II"/>
</dbReference>
<dbReference type="InterPro" id="IPR018509">
    <property type="entry name" value="DHquinase_II_CS"/>
</dbReference>
<dbReference type="InterPro" id="IPR036441">
    <property type="entry name" value="DHquinase_II_sf"/>
</dbReference>
<dbReference type="NCBIfam" id="TIGR01088">
    <property type="entry name" value="aroQ"/>
    <property type="match status" value="1"/>
</dbReference>
<dbReference type="NCBIfam" id="NF003804">
    <property type="entry name" value="PRK05395.1-1"/>
    <property type="match status" value="1"/>
</dbReference>
<dbReference type="NCBIfam" id="NF003805">
    <property type="entry name" value="PRK05395.1-2"/>
    <property type="match status" value="1"/>
</dbReference>
<dbReference type="NCBIfam" id="NF003806">
    <property type="entry name" value="PRK05395.1-3"/>
    <property type="match status" value="1"/>
</dbReference>
<dbReference type="NCBIfam" id="NF003807">
    <property type="entry name" value="PRK05395.1-4"/>
    <property type="match status" value="1"/>
</dbReference>
<dbReference type="PANTHER" id="PTHR21272">
    <property type="entry name" value="CATABOLIC 3-DEHYDROQUINASE"/>
    <property type="match status" value="1"/>
</dbReference>
<dbReference type="PANTHER" id="PTHR21272:SF3">
    <property type="entry name" value="CATABOLIC 3-DEHYDROQUINASE"/>
    <property type="match status" value="1"/>
</dbReference>
<dbReference type="Pfam" id="PF01220">
    <property type="entry name" value="DHquinase_II"/>
    <property type="match status" value="1"/>
</dbReference>
<dbReference type="PIRSF" id="PIRSF001399">
    <property type="entry name" value="DHquinase_II"/>
    <property type="match status" value="1"/>
</dbReference>
<dbReference type="SUPFAM" id="SSF52304">
    <property type="entry name" value="Type II 3-dehydroquinate dehydratase"/>
    <property type="match status" value="1"/>
</dbReference>
<dbReference type="PROSITE" id="PS01029">
    <property type="entry name" value="DEHYDROQUINASE_II"/>
    <property type="match status" value="1"/>
</dbReference>